<comment type="function">
    <text evidence="1">Participates actively in the response to hyperosmotic and heat shock by preventing the aggregation of stress-denatured proteins, in association with DnaK and GrpE. It is the nucleotide exchange factor for DnaK and may function as a thermosensor. Unfolded proteins bind initially to DnaJ; upon interaction with the DnaJ-bound protein, DnaK hydrolyzes its bound ATP, resulting in the formation of a stable complex. GrpE releases ADP from DnaK; ATP binding to DnaK triggers the release of the substrate protein, thus completing the reaction cycle. Several rounds of ATP-dependent interactions between DnaJ, DnaK and GrpE are required for fully efficient folding.</text>
</comment>
<comment type="subunit">
    <text evidence="1">Homodimer.</text>
</comment>
<comment type="subcellular location">
    <subcellularLocation>
        <location evidence="1">Cytoplasm</location>
    </subcellularLocation>
</comment>
<comment type="similarity">
    <text evidence="1">Belongs to the GrpE family.</text>
</comment>
<accession>Q5H187</accession>
<gene>
    <name evidence="1" type="primary">grpE</name>
    <name type="ordered locus">XOO2030</name>
</gene>
<name>GRPE_XANOR</name>
<organism>
    <name type="scientific">Xanthomonas oryzae pv. oryzae (strain KACC10331 / KXO85)</name>
    <dbReference type="NCBI Taxonomy" id="291331"/>
    <lineage>
        <taxon>Bacteria</taxon>
        <taxon>Pseudomonadati</taxon>
        <taxon>Pseudomonadota</taxon>
        <taxon>Gammaproteobacteria</taxon>
        <taxon>Lysobacterales</taxon>
        <taxon>Lysobacteraceae</taxon>
        <taxon>Xanthomonas</taxon>
    </lineage>
</organism>
<reference key="1">
    <citation type="journal article" date="2005" name="Nucleic Acids Res.">
        <title>The genome sequence of Xanthomonas oryzae pathovar oryzae KACC10331, the bacterial blight pathogen of rice.</title>
        <authorList>
            <person name="Lee B.-M."/>
            <person name="Park Y.-J."/>
            <person name="Park D.-S."/>
            <person name="Kang H.-W."/>
            <person name="Kim J.-G."/>
            <person name="Song E.-S."/>
            <person name="Park I.-C."/>
            <person name="Yoon U.-H."/>
            <person name="Hahn J.-H."/>
            <person name="Koo B.-S."/>
            <person name="Lee G.-B."/>
            <person name="Kim H."/>
            <person name="Park H.-S."/>
            <person name="Yoon K.-O."/>
            <person name="Kim J.-H."/>
            <person name="Jung C.-H."/>
            <person name="Koh N.-H."/>
            <person name="Seo J.-S."/>
            <person name="Go S.-J."/>
        </authorList>
    </citation>
    <scope>NUCLEOTIDE SEQUENCE [LARGE SCALE GENOMIC DNA]</scope>
    <source>
        <strain>KACC10331 / KXO85</strain>
    </source>
</reference>
<feature type="chain" id="PRO_1000053663" description="Protein GrpE">
    <location>
        <begin position="1"/>
        <end position="172"/>
    </location>
</feature>
<feature type="region of interest" description="Disordered" evidence="2">
    <location>
        <begin position="1"/>
        <end position="24"/>
    </location>
</feature>
<sequence>MNQDHPEFDSEDLAQNPPETDPLKAEIESLRSEIALVKADALRERADLENQRKRIARDVENARKFANEKLLGELLPVFDSLDAGLTAAGTQPSPLRDGLDMTYKQLLKVAADNGLTLLDPVGQPFNPDQHQAISQGEAEGIAPGHVVQVFQKGYLLNDRLLRPALVVVAKQD</sequence>
<dbReference type="EMBL" id="AE013598">
    <property type="protein sequence ID" value="AAW75284.1"/>
    <property type="molecule type" value="Genomic_DNA"/>
</dbReference>
<dbReference type="SMR" id="Q5H187"/>
<dbReference type="STRING" id="291331.XOO2030"/>
<dbReference type="KEGG" id="xoo:XOO2030"/>
<dbReference type="HOGENOM" id="CLU_057217_6_0_6"/>
<dbReference type="Proteomes" id="UP000006735">
    <property type="component" value="Chromosome"/>
</dbReference>
<dbReference type="GO" id="GO:0005829">
    <property type="term" value="C:cytosol"/>
    <property type="evidence" value="ECO:0007669"/>
    <property type="project" value="TreeGrafter"/>
</dbReference>
<dbReference type="GO" id="GO:0000774">
    <property type="term" value="F:adenyl-nucleotide exchange factor activity"/>
    <property type="evidence" value="ECO:0007669"/>
    <property type="project" value="InterPro"/>
</dbReference>
<dbReference type="GO" id="GO:0042803">
    <property type="term" value="F:protein homodimerization activity"/>
    <property type="evidence" value="ECO:0007669"/>
    <property type="project" value="InterPro"/>
</dbReference>
<dbReference type="GO" id="GO:0051087">
    <property type="term" value="F:protein-folding chaperone binding"/>
    <property type="evidence" value="ECO:0007669"/>
    <property type="project" value="InterPro"/>
</dbReference>
<dbReference type="GO" id="GO:0051082">
    <property type="term" value="F:unfolded protein binding"/>
    <property type="evidence" value="ECO:0007669"/>
    <property type="project" value="TreeGrafter"/>
</dbReference>
<dbReference type="GO" id="GO:0006457">
    <property type="term" value="P:protein folding"/>
    <property type="evidence" value="ECO:0007669"/>
    <property type="project" value="InterPro"/>
</dbReference>
<dbReference type="CDD" id="cd00446">
    <property type="entry name" value="GrpE"/>
    <property type="match status" value="1"/>
</dbReference>
<dbReference type="FunFam" id="2.30.22.10:FF:000001">
    <property type="entry name" value="Protein GrpE"/>
    <property type="match status" value="1"/>
</dbReference>
<dbReference type="Gene3D" id="3.90.20.20">
    <property type="match status" value="1"/>
</dbReference>
<dbReference type="Gene3D" id="2.30.22.10">
    <property type="entry name" value="Head domain of nucleotide exchange factor GrpE"/>
    <property type="match status" value="1"/>
</dbReference>
<dbReference type="HAMAP" id="MF_01151">
    <property type="entry name" value="GrpE"/>
    <property type="match status" value="1"/>
</dbReference>
<dbReference type="InterPro" id="IPR000740">
    <property type="entry name" value="GrpE"/>
</dbReference>
<dbReference type="InterPro" id="IPR013805">
    <property type="entry name" value="GrpE_coiled_coil"/>
</dbReference>
<dbReference type="InterPro" id="IPR009012">
    <property type="entry name" value="GrpE_head"/>
</dbReference>
<dbReference type="NCBIfam" id="NF010738">
    <property type="entry name" value="PRK14140.1"/>
    <property type="match status" value="1"/>
</dbReference>
<dbReference type="NCBIfam" id="NF010745">
    <property type="entry name" value="PRK14147.1"/>
    <property type="match status" value="1"/>
</dbReference>
<dbReference type="PANTHER" id="PTHR21237">
    <property type="entry name" value="GRPE PROTEIN"/>
    <property type="match status" value="1"/>
</dbReference>
<dbReference type="PANTHER" id="PTHR21237:SF23">
    <property type="entry name" value="GRPE PROTEIN HOMOLOG, MITOCHONDRIAL"/>
    <property type="match status" value="1"/>
</dbReference>
<dbReference type="Pfam" id="PF01025">
    <property type="entry name" value="GrpE"/>
    <property type="match status" value="1"/>
</dbReference>
<dbReference type="PRINTS" id="PR00773">
    <property type="entry name" value="GRPEPROTEIN"/>
</dbReference>
<dbReference type="SUPFAM" id="SSF58014">
    <property type="entry name" value="Coiled-coil domain of nucleotide exchange factor GrpE"/>
    <property type="match status" value="1"/>
</dbReference>
<dbReference type="SUPFAM" id="SSF51064">
    <property type="entry name" value="Head domain of nucleotide exchange factor GrpE"/>
    <property type="match status" value="1"/>
</dbReference>
<dbReference type="PROSITE" id="PS01071">
    <property type="entry name" value="GRPE"/>
    <property type="match status" value="1"/>
</dbReference>
<evidence type="ECO:0000255" key="1">
    <source>
        <dbReference type="HAMAP-Rule" id="MF_01151"/>
    </source>
</evidence>
<evidence type="ECO:0000256" key="2">
    <source>
        <dbReference type="SAM" id="MobiDB-lite"/>
    </source>
</evidence>
<protein>
    <recommendedName>
        <fullName evidence="1">Protein GrpE</fullName>
    </recommendedName>
    <alternativeName>
        <fullName evidence="1">HSP-70 cofactor</fullName>
    </alternativeName>
</protein>
<keyword id="KW-0143">Chaperone</keyword>
<keyword id="KW-0963">Cytoplasm</keyword>
<keyword id="KW-1185">Reference proteome</keyword>
<keyword id="KW-0346">Stress response</keyword>
<proteinExistence type="inferred from homology"/>